<dbReference type="EC" id="2.4.99.16" evidence="2"/>
<dbReference type="EMBL" id="AJ001205">
    <property type="protein sequence ID" value="CAA04600.1"/>
    <property type="molecule type" value="Genomic_DNA"/>
</dbReference>
<dbReference type="EMBL" id="AL939123">
    <property type="protein sequence ID" value="CAB72419.1"/>
    <property type="molecule type" value="Genomic_DNA"/>
</dbReference>
<dbReference type="RefSeq" id="NP_629581.1">
    <property type="nucleotide sequence ID" value="NC_003888.3"/>
</dbReference>
<dbReference type="RefSeq" id="WP_011030248.1">
    <property type="nucleotide sequence ID" value="NZ_VNID01000011.1"/>
</dbReference>
<dbReference type="PDB" id="3ZSS">
    <property type="method" value="X-ray"/>
    <property type="resolution" value="1.80 A"/>
    <property type="chains" value="A/B/C/D=1-675"/>
</dbReference>
<dbReference type="PDB" id="3ZST">
    <property type="method" value="X-ray"/>
    <property type="resolution" value="2.30 A"/>
    <property type="chains" value="A/B=1-675"/>
</dbReference>
<dbReference type="PDB" id="3ZT5">
    <property type="method" value="X-ray"/>
    <property type="resolution" value="2.09 A"/>
    <property type="chains" value="A/B/C/D=1-675"/>
</dbReference>
<dbReference type="PDB" id="3ZT6">
    <property type="method" value="X-ray"/>
    <property type="resolution" value="2.19 A"/>
    <property type="chains" value="A/B/C/D=1-675"/>
</dbReference>
<dbReference type="PDB" id="3ZT7">
    <property type="method" value="X-ray"/>
    <property type="resolution" value="2.50 A"/>
    <property type="chains" value="A/B/C/D=1-675"/>
</dbReference>
<dbReference type="PDB" id="4CN1">
    <property type="method" value="X-ray"/>
    <property type="resolution" value="2.55 A"/>
    <property type="chains" value="A/B=1-675"/>
</dbReference>
<dbReference type="PDB" id="4CN4">
    <property type="method" value="X-ray"/>
    <property type="resolution" value="2.40 A"/>
    <property type="chains" value="A/B=1-675"/>
</dbReference>
<dbReference type="PDB" id="4CN6">
    <property type="method" value="X-ray"/>
    <property type="resolution" value="2.29 A"/>
    <property type="chains" value="A/B=1-675"/>
</dbReference>
<dbReference type="PDB" id="4U2Y">
    <property type="method" value="X-ray"/>
    <property type="resolution" value="2.48 A"/>
    <property type="chains" value="A/B=1-675"/>
</dbReference>
<dbReference type="PDB" id="4U2Z">
    <property type="method" value="X-ray"/>
    <property type="resolution" value="2.26 A"/>
    <property type="chains" value="A/B=1-675"/>
</dbReference>
<dbReference type="PDB" id="4U31">
    <property type="method" value="X-ray"/>
    <property type="resolution" value="1.85 A"/>
    <property type="chains" value="A/B=1-675"/>
</dbReference>
<dbReference type="PDB" id="5CVS">
    <property type="method" value="X-ray"/>
    <property type="resolution" value="2.30 A"/>
    <property type="chains" value="A/B=1-675"/>
</dbReference>
<dbReference type="PDB" id="5LGV">
    <property type="method" value="X-ray"/>
    <property type="resolution" value="2.50 A"/>
    <property type="chains" value="A/B=1-675"/>
</dbReference>
<dbReference type="PDB" id="5LGW">
    <property type="method" value="X-ray"/>
    <property type="resolution" value="1.95 A"/>
    <property type="chains" value="A/B=1-675"/>
</dbReference>
<dbReference type="PDB" id="5VSJ">
    <property type="method" value="X-ray"/>
    <property type="resolution" value="2.46 A"/>
    <property type="chains" value="A/B=1-663"/>
</dbReference>
<dbReference type="PDB" id="5VT4">
    <property type="method" value="X-ray"/>
    <property type="resolution" value="3.21 A"/>
    <property type="chains" value="A/B/C/D=1-663"/>
</dbReference>
<dbReference type="PDB" id="7MEL">
    <property type="method" value="X-ray"/>
    <property type="resolution" value="1.75 A"/>
    <property type="chains" value="A/B=1-675"/>
</dbReference>
<dbReference type="PDB" id="7MGY">
    <property type="method" value="X-ray"/>
    <property type="resolution" value="1.83 A"/>
    <property type="chains" value="A/B=1-675"/>
</dbReference>
<dbReference type="PDB" id="7UVD">
    <property type="method" value="X-ray"/>
    <property type="resolution" value="2.73 A"/>
    <property type="chains" value="A/B=1-675"/>
</dbReference>
<dbReference type="PDB" id="8D6K">
    <property type="method" value="X-ray"/>
    <property type="resolution" value="2.73 A"/>
    <property type="chains" value="A/B=1-675"/>
</dbReference>
<dbReference type="PDBsum" id="3ZSS"/>
<dbReference type="PDBsum" id="3ZST"/>
<dbReference type="PDBsum" id="3ZT5"/>
<dbReference type="PDBsum" id="3ZT6"/>
<dbReference type="PDBsum" id="3ZT7"/>
<dbReference type="PDBsum" id="4CN1"/>
<dbReference type="PDBsum" id="4CN4"/>
<dbReference type="PDBsum" id="4CN6"/>
<dbReference type="PDBsum" id="4U2Y"/>
<dbReference type="PDBsum" id="4U2Z"/>
<dbReference type="PDBsum" id="4U31"/>
<dbReference type="PDBsum" id="5CVS"/>
<dbReference type="PDBsum" id="5LGV"/>
<dbReference type="PDBsum" id="5LGW"/>
<dbReference type="PDBsum" id="5VSJ"/>
<dbReference type="PDBsum" id="5VT4"/>
<dbReference type="PDBsum" id="7MEL"/>
<dbReference type="PDBsum" id="7MGY"/>
<dbReference type="PDBsum" id="7UVD"/>
<dbReference type="PDBsum" id="8D6K"/>
<dbReference type="SMR" id="Q9L1K2"/>
<dbReference type="FunCoup" id="Q9L1K2">
    <property type="interactions" value="27"/>
</dbReference>
<dbReference type="STRING" id="100226.gene:17763095"/>
<dbReference type="CAZy" id="GH13">
    <property type="family name" value="Glycoside Hydrolase Family 13"/>
</dbReference>
<dbReference type="PaxDb" id="100226-SCO5443"/>
<dbReference type="KEGG" id="sco:SCO5443"/>
<dbReference type="PATRIC" id="fig|100226.15.peg.5524"/>
<dbReference type="eggNOG" id="COG0366">
    <property type="taxonomic scope" value="Bacteria"/>
</dbReference>
<dbReference type="HOGENOM" id="CLU_015798_0_0_11"/>
<dbReference type="InParanoid" id="Q9L1K2"/>
<dbReference type="OrthoDB" id="9805159at2"/>
<dbReference type="PhylomeDB" id="Q9L1K2"/>
<dbReference type="BRENDA" id="2.4.99.16">
    <property type="organism ID" value="5998"/>
</dbReference>
<dbReference type="EvolutionaryTrace" id="Q9L1K2"/>
<dbReference type="Proteomes" id="UP000001973">
    <property type="component" value="Chromosome"/>
</dbReference>
<dbReference type="GO" id="GO:0004556">
    <property type="term" value="F:alpha-amylase activity"/>
    <property type="evidence" value="ECO:0000318"/>
    <property type="project" value="GO_Central"/>
</dbReference>
<dbReference type="GO" id="GO:0016758">
    <property type="term" value="F:hexosyltransferase activity"/>
    <property type="evidence" value="ECO:0007669"/>
    <property type="project" value="UniProtKB-UniRule"/>
</dbReference>
<dbReference type="GO" id="GO:0030979">
    <property type="term" value="P:alpha-glucan biosynthetic process"/>
    <property type="evidence" value="ECO:0007669"/>
    <property type="project" value="UniProtKB-UniRule"/>
</dbReference>
<dbReference type="GO" id="GO:0009313">
    <property type="term" value="P:oligosaccharide catabolic process"/>
    <property type="evidence" value="ECO:0000318"/>
    <property type="project" value="GO_Central"/>
</dbReference>
<dbReference type="CDD" id="cd11344">
    <property type="entry name" value="AmyAc_GlgE_like"/>
    <property type="match status" value="1"/>
</dbReference>
<dbReference type="Gene3D" id="3.20.20.80">
    <property type="entry name" value="Glycosidases"/>
    <property type="match status" value="1"/>
</dbReference>
<dbReference type="Gene3D" id="2.60.40.1180">
    <property type="entry name" value="Golgi alpha-mannosidase II"/>
    <property type="match status" value="1"/>
</dbReference>
<dbReference type="Gene3D" id="2.60.40.10">
    <property type="entry name" value="Immunoglobulins"/>
    <property type="match status" value="1"/>
</dbReference>
<dbReference type="Gene3D" id="1.20.58.80">
    <property type="entry name" value="Phosphotransferase system, lactose/cellobiose-type IIA subunit"/>
    <property type="match status" value="1"/>
</dbReference>
<dbReference type="HAMAP" id="MF_02124">
    <property type="entry name" value="GlgE"/>
    <property type="match status" value="1"/>
</dbReference>
<dbReference type="InterPro" id="IPR026585">
    <property type="entry name" value="GlgE"/>
</dbReference>
<dbReference type="InterPro" id="IPR049171">
    <property type="entry name" value="GLGE_C"/>
</dbReference>
<dbReference type="InterPro" id="IPR021828">
    <property type="entry name" value="GlgE_dom_N/S"/>
</dbReference>
<dbReference type="InterPro" id="IPR006047">
    <property type="entry name" value="Glyco_hydro_13_cat_dom"/>
</dbReference>
<dbReference type="InterPro" id="IPR013780">
    <property type="entry name" value="Glyco_hydro_b"/>
</dbReference>
<dbReference type="InterPro" id="IPR017853">
    <property type="entry name" value="Glycoside_hydrolase_SF"/>
</dbReference>
<dbReference type="InterPro" id="IPR013783">
    <property type="entry name" value="Ig-like_fold"/>
</dbReference>
<dbReference type="PANTHER" id="PTHR47786">
    <property type="entry name" value="ALPHA-1,4-GLUCAN:MALTOSE-1-PHOSPHATE MALTOSYLTRANSFERASE"/>
    <property type="match status" value="1"/>
</dbReference>
<dbReference type="PANTHER" id="PTHR47786:SF2">
    <property type="entry name" value="GLYCOSYL HYDROLASE FAMILY 13 CATALYTIC DOMAIN-CONTAINING PROTEIN"/>
    <property type="match status" value="1"/>
</dbReference>
<dbReference type="Pfam" id="PF21702">
    <property type="entry name" value="GLGE_C"/>
    <property type="match status" value="1"/>
</dbReference>
<dbReference type="Pfam" id="PF11896">
    <property type="entry name" value="GlgE_dom_N_S"/>
    <property type="match status" value="1"/>
</dbReference>
<dbReference type="SMART" id="SM00642">
    <property type="entry name" value="Aamy"/>
    <property type="match status" value="1"/>
</dbReference>
<dbReference type="SUPFAM" id="SSF51445">
    <property type="entry name" value="(Trans)glycosidases"/>
    <property type="match status" value="1"/>
</dbReference>
<dbReference type="SUPFAM" id="SSF51011">
    <property type="entry name" value="Glycosyl hydrolase domain"/>
    <property type="match status" value="1"/>
</dbReference>
<sequence length="675" mass="75290">MPATHHSSATSAERPTVVGRIPVLDVRPVVQRGRRPAKAVTGESFEVSATVFREGHDAVGANVVLRDPRGRPGPWTPMRELAPGTDRWGATVTAGETGTWSYTVEAWGDPVTTWRHHARIKIPAGLDTDLVLEEGARLYERAAADVPGREDRRELLAAVDALRDESRPAASRLAAALTPQVDAVLARHPLRDLVTSSDPLPLLVERERALYGAWYEFFPRSEGTPHTPHGTFRTAARRLPAIAAMGFDVVYLPPIHPIGTTHRKGRNNTLSATGDDVGVPWAIGSPEGGHDSIHPALGTLDDFDHFVTEAGKLGLEIALDFALQCSPDHPWVHKHPEWFHHRPDGTIAHAENPPKKYQDIYPIAFDADPDGLATETVRILRHWMDHGVRIFRVDNPHTKPVAFWERVIADINGTDPDVIFLAEAFTRPAMMATLAQIGFQQSYTYFTWRNTKQELTEYLTELSGEAASYMRPNFFANTPDILHAYLQHGGRPAFEVRAVLAATLSPTWGIYSGYELCENTPLREGSEEYLDSEKYQLKPRDWTRAAREGTTIAPLVTRLNTIRRENPALRQLRDLHFHPTDKEEVIAYSKRQGSNTVLVVVNLDPRHTQEATVSLDMPQLGLDWHESVPVRDELTGETYHWGRANYVRLEPGRTPAHVCTVLRPSHPQIGGSHTT</sequence>
<organism>
    <name type="scientific">Streptomyces coelicolor (strain ATCC BAA-471 / A3(2) / M145)</name>
    <dbReference type="NCBI Taxonomy" id="100226"/>
    <lineage>
        <taxon>Bacteria</taxon>
        <taxon>Bacillati</taxon>
        <taxon>Actinomycetota</taxon>
        <taxon>Actinomycetes</taxon>
        <taxon>Kitasatosporales</taxon>
        <taxon>Streptomycetaceae</taxon>
        <taxon>Streptomyces</taxon>
        <taxon>Streptomyces albidoflavus group</taxon>
    </lineage>
</organism>
<proteinExistence type="evidence at protein level"/>
<feature type="chain" id="PRO_0000054349" description="Alpha-1,4-glucan:maltose-1-phosphate maltosyltransferase 1">
    <location>
        <begin position="1"/>
        <end position="675"/>
    </location>
</feature>
<feature type="active site" description="Nucleophile" evidence="4">
    <location>
        <position position="394"/>
    </location>
</feature>
<feature type="active site" description="Proton donor" evidence="4">
    <location>
        <position position="423"/>
    </location>
</feature>
<feature type="binding site" evidence="4">
    <location>
        <position position="264"/>
    </location>
    <ligand>
        <name>alpha-maltose 1-phosphate</name>
        <dbReference type="ChEBI" id="CHEBI:63576"/>
    </ligand>
</feature>
<feature type="binding site" evidence="4">
    <location>
        <position position="324"/>
    </location>
    <ligand>
        <name>alpha-maltose 1-phosphate</name>
        <dbReference type="ChEBI" id="CHEBI:63576"/>
    </ligand>
</feature>
<feature type="binding site" evidence="4">
    <location>
        <position position="359"/>
    </location>
    <ligand>
        <name>alpha-maltose 1-phosphate</name>
        <dbReference type="ChEBI" id="CHEBI:63576"/>
    </ligand>
</feature>
<feature type="binding site" evidence="4">
    <location>
        <position position="395"/>
    </location>
    <ligand>
        <name>alpha-maltose 1-phosphate</name>
        <dbReference type="ChEBI" id="CHEBI:63576"/>
    </ligand>
</feature>
<feature type="binding site" evidence="4">
    <location>
        <begin position="534"/>
        <end position="535"/>
    </location>
    <ligand>
        <name>alpha-maltose 1-phosphate</name>
        <dbReference type="ChEBI" id="CHEBI:63576"/>
    </ligand>
</feature>
<feature type="site" description="Transition state stabilizer" evidence="4">
    <location>
        <position position="480"/>
    </location>
</feature>
<feature type="sequence conflict" description="In Ref. 1; CAA04600." evidence="3" ref="1">
    <original>F</original>
    <variation>W</variation>
    <location>
        <position position="218"/>
    </location>
</feature>
<feature type="sequence conflict" description="In Ref. 1; CAA04600." evidence="3" ref="1">
    <original>NT</original>
    <variation>LR</variation>
    <location>
        <begin position="450"/>
        <end position="451"/>
    </location>
</feature>
<feature type="strand" evidence="9">
    <location>
        <begin position="23"/>
        <end position="28"/>
    </location>
</feature>
<feature type="helix" evidence="9">
    <location>
        <begin position="31"/>
        <end position="33"/>
    </location>
</feature>
<feature type="strand" evidence="9">
    <location>
        <begin position="37"/>
        <end position="40"/>
    </location>
</feature>
<feature type="strand" evidence="9">
    <location>
        <begin position="44"/>
        <end position="51"/>
    </location>
</feature>
<feature type="strand" evidence="9">
    <location>
        <begin position="54"/>
        <end position="57"/>
    </location>
</feature>
<feature type="strand" evidence="9">
    <location>
        <begin position="59"/>
        <end position="66"/>
    </location>
</feature>
<feature type="strand" evidence="9">
    <location>
        <begin position="79"/>
        <end position="82"/>
    </location>
</feature>
<feature type="strand" evidence="9">
    <location>
        <begin position="87"/>
        <end position="93"/>
    </location>
</feature>
<feature type="strand" evidence="9">
    <location>
        <begin position="96"/>
        <end position="108"/>
    </location>
</feature>
<feature type="helix" evidence="9">
    <location>
        <begin position="110"/>
        <end position="121"/>
    </location>
</feature>
<feature type="turn" evidence="9">
    <location>
        <begin position="122"/>
        <end position="125"/>
    </location>
</feature>
<feature type="helix" evidence="9">
    <location>
        <begin position="128"/>
        <end position="143"/>
    </location>
</feature>
<feature type="helix" evidence="9">
    <location>
        <begin position="149"/>
        <end position="162"/>
    </location>
</feature>
<feature type="helix" evidence="9">
    <location>
        <begin position="169"/>
        <end position="174"/>
    </location>
</feature>
<feature type="helix" evidence="9">
    <location>
        <begin position="175"/>
        <end position="177"/>
    </location>
</feature>
<feature type="helix" evidence="9">
    <location>
        <begin position="179"/>
        <end position="187"/>
    </location>
</feature>
<feature type="strand" evidence="9">
    <location>
        <begin position="192"/>
        <end position="196"/>
    </location>
</feature>
<feature type="strand" evidence="9">
    <location>
        <begin position="200"/>
        <end position="205"/>
    </location>
</feature>
<feature type="helix" evidence="9">
    <location>
        <begin position="207"/>
        <end position="209"/>
    </location>
</feature>
<feature type="strand" evidence="9">
    <location>
        <begin position="212"/>
        <end position="216"/>
    </location>
</feature>
<feature type="helix" evidence="9">
    <location>
        <begin position="219"/>
        <end position="221"/>
    </location>
</feature>
<feature type="strand" evidence="9">
    <location>
        <begin position="225"/>
        <end position="227"/>
    </location>
</feature>
<feature type="helix" evidence="9">
    <location>
        <begin position="232"/>
        <end position="235"/>
    </location>
</feature>
<feature type="helix" evidence="9">
    <location>
        <begin position="236"/>
        <end position="238"/>
    </location>
</feature>
<feature type="helix" evidence="9">
    <location>
        <begin position="239"/>
        <end position="244"/>
    </location>
</feature>
<feature type="strand" evidence="9">
    <location>
        <begin position="248"/>
        <end position="252"/>
    </location>
</feature>
<feature type="helix" evidence="9">
    <location>
        <begin position="266"/>
        <end position="268"/>
    </location>
</feature>
<feature type="strand" evidence="6">
    <location>
        <begin position="269"/>
        <end position="271"/>
    </location>
</feature>
<feature type="helix" evidence="9">
    <location>
        <begin position="295"/>
        <end position="297"/>
    </location>
</feature>
<feature type="helix" evidence="9">
    <location>
        <begin position="300"/>
        <end position="312"/>
    </location>
</feature>
<feature type="strand" evidence="9">
    <location>
        <begin position="316"/>
        <end position="321"/>
    </location>
</feature>
<feature type="helix" evidence="9">
    <location>
        <begin position="331"/>
        <end position="334"/>
    </location>
</feature>
<feature type="helix" evidence="9">
    <location>
        <begin position="336"/>
        <end position="338"/>
    </location>
</feature>
<feature type="strand" evidence="9">
    <location>
        <begin position="350"/>
        <end position="352"/>
    </location>
</feature>
<feature type="strand" evidence="9">
    <location>
        <begin position="355"/>
        <end position="357"/>
    </location>
</feature>
<feature type="strand" evidence="8">
    <location>
        <begin position="366"/>
        <end position="368"/>
    </location>
</feature>
<feature type="helix" evidence="9">
    <location>
        <begin position="369"/>
        <end position="385"/>
    </location>
</feature>
<feature type="strand" evidence="9">
    <location>
        <begin position="390"/>
        <end position="394"/>
    </location>
</feature>
<feature type="helix" evidence="9">
    <location>
        <begin position="396"/>
        <end position="398"/>
    </location>
</feature>
<feature type="helix" evidence="9">
    <location>
        <begin position="401"/>
        <end position="414"/>
    </location>
</feature>
<feature type="strand" evidence="9">
    <location>
        <begin position="419"/>
        <end position="423"/>
    </location>
</feature>
<feature type="helix" evidence="9">
    <location>
        <begin position="428"/>
        <end position="436"/>
    </location>
</feature>
<feature type="strand" evidence="9">
    <location>
        <begin position="440"/>
        <end position="442"/>
    </location>
</feature>
<feature type="helix" evidence="9">
    <location>
        <begin position="446"/>
        <end position="448"/>
    </location>
</feature>
<feature type="helix" evidence="9">
    <location>
        <begin position="452"/>
        <end position="463"/>
    </location>
</feature>
<feature type="helix" evidence="9">
    <location>
        <begin position="465"/>
        <end position="468"/>
    </location>
</feature>
<feature type="strand" evidence="9">
    <location>
        <begin position="474"/>
        <end position="476"/>
    </location>
</feature>
<feature type="helix" evidence="9">
    <location>
        <begin position="484"/>
        <end position="504"/>
    </location>
</feature>
<feature type="strand" evidence="9">
    <location>
        <begin position="506"/>
        <end position="511"/>
    </location>
</feature>
<feature type="turn" evidence="9">
    <location>
        <begin position="512"/>
        <end position="517"/>
    </location>
</feature>
<feature type="strand" evidence="9">
    <location>
        <begin position="521"/>
        <end position="523"/>
    </location>
</feature>
<feature type="turn" evidence="5">
    <location>
        <begin position="533"/>
        <end position="535"/>
    </location>
</feature>
<feature type="helix" evidence="9">
    <location>
        <begin position="542"/>
        <end position="547"/>
    </location>
</feature>
<feature type="helix" evidence="9">
    <location>
        <begin position="553"/>
        <end position="565"/>
    </location>
</feature>
<feature type="helix" evidence="9">
    <location>
        <begin position="567"/>
        <end position="570"/>
    </location>
</feature>
<feature type="strand" evidence="7">
    <location>
        <begin position="576"/>
        <end position="578"/>
    </location>
</feature>
<feature type="strand" evidence="9">
    <location>
        <begin position="580"/>
        <end position="582"/>
    </location>
</feature>
<feature type="strand" evidence="9">
    <location>
        <begin position="585"/>
        <end position="592"/>
    </location>
</feature>
<feature type="strand" evidence="9">
    <location>
        <begin position="595"/>
        <end position="602"/>
    </location>
</feature>
<feature type="strand" evidence="9">
    <location>
        <begin position="605"/>
        <end position="607"/>
    </location>
</feature>
<feature type="strand" evidence="9">
    <location>
        <begin position="609"/>
        <end position="614"/>
    </location>
</feature>
<feature type="helix" evidence="9">
    <location>
        <begin position="617"/>
        <end position="620"/>
    </location>
</feature>
<feature type="strand" evidence="9">
    <location>
        <begin position="628"/>
        <end position="632"/>
    </location>
</feature>
<feature type="turn" evidence="9">
    <location>
        <begin position="633"/>
        <end position="635"/>
    </location>
</feature>
<feature type="strand" evidence="9">
    <location>
        <begin position="638"/>
        <end position="641"/>
    </location>
</feature>
<feature type="strand" evidence="9">
    <location>
        <begin position="643"/>
        <end position="649"/>
    </location>
</feature>
<feature type="turn" evidence="9">
    <location>
        <begin position="651"/>
        <end position="653"/>
    </location>
</feature>
<feature type="strand" evidence="9">
    <location>
        <begin position="655"/>
        <end position="661"/>
    </location>
</feature>
<reference key="1">
    <citation type="journal article" date="2000" name="Mol. Gen. Genet.">
        <title>Duplicated gene clusters suggest an interplay of glycogen and trehalose metabolism during sequential stages of aerial mycelium development in Streptomyces coelicolor A3(2).</title>
        <authorList>
            <person name="Schneider D."/>
            <person name="Bruton C.J."/>
            <person name="Chater K.F."/>
        </authorList>
    </citation>
    <scope>NUCLEOTIDE SEQUENCE [GENOMIC DNA]</scope>
    <source>
        <strain>A3(2) / NRRL B-16638</strain>
    </source>
</reference>
<reference key="2">
    <citation type="journal article" date="2002" name="Nature">
        <title>Complete genome sequence of the model actinomycete Streptomyces coelicolor A3(2).</title>
        <authorList>
            <person name="Bentley S.D."/>
            <person name="Chater K.F."/>
            <person name="Cerdeno-Tarraga A.-M."/>
            <person name="Challis G.L."/>
            <person name="Thomson N.R."/>
            <person name="James K.D."/>
            <person name="Harris D.E."/>
            <person name="Quail M.A."/>
            <person name="Kieser H."/>
            <person name="Harper D."/>
            <person name="Bateman A."/>
            <person name="Brown S."/>
            <person name="Chandra G."/>
            <person name="Chen C.W."/>
            <person name="Collins M."/>
            <person name="Cronin A."/>
            <person name="Fraser A."/>
            <person name="Goble A."/>
            <person name="Hidalgo J."/>
            <person name="Hornsby T."/>
            <person name="Howarth S."/>
            <person name="Huang C.-H."/>
            <person name="Kieser T."/>
            <person name="Larke L."/>
            <person name="Murphy L.D."/>
            <person name="Oliver K."/>
            <person name="O'Neil S."/>
            <person name="Rabbinowitsch E."/>
            <person name="Rajandream M.A."/>
            <person name="Rutherford K.M."/>
            <person name="Rutter S."/>
            <person name="Seeger K."/>
            <person name="Saunders D."/>
            <person name="Sharp S."/>
            <person name="Squares R."/>
            <person name="Squares S."/>
            <person name="Taylor K."/>
            <person name="Warren T."/>
            <person name="Wietzorrek A."/>
            <person name="Woodward J.R."/>
            <person name="Barrell B.G."/>
            <person name="Parkhill J."/>
            <person name="Hopwood D.A."/>
        </authorList>
    </citation>
    <scope>NUCLEOTIDE SEQUENCE [LARGE SCALE GENOMIC DNA]</scope>
    <source>
        <strain>ATCC BAA-471 / A3(2) / M145</strain>
    </source>
</reference>
<reference key="3">
    <citation type="journal article" date="2011" name="J. Biol. Chem.">
        <title>Structure of a Streptomyces maltosyltransferase GlgE: a homologue of a genetically validated anti-tuberculosis target.</title>
        <authorList>
            <person name="Syson K."/>
            <person name="Stevenson C.E."/>
            <person name="Rejzek M."/>
            <person name="Fairhurst S.A."/>
            <person name="Nair A."/>
            <person name="Bruton C.J."/>
            <person name="Field R.A."/>
            <person name="Chater K.F."/>
            <person name="Lawson D.M."/>
            <person name="Bornemann S."/>
        </authorList>
    </citation>
    <scope>X-RAY CRYSTALLOGRAPHY (1.80 ANGSTROMS) OF APOENZYME AND COMPLEXES WITH MALTOSE AND ALPHA- OR BETA-CYCLODEXTRIN</scope>
    <scope>FUNCTION</scope>
    <scope>CATALYTIC ACTIVITY</scope>
    <scope>SUBSTRATE SPECIFICITY</scope>
    <scope>BIOPHYSICOCHEMICAL PROPERTIES</scope>
    <scope>SUBUNIT</scope>
    <source>
        <strain>ATCC BAA-471 / A3(2) / M145</strain>
    </source>
</reference>
<evidence type="ECO:0000255" key="1">
    <source>
        <dbReference type="HAMAP-Rule" id="MF_02124"/>
    </source>
</evidence>
<evidence type="ECO:0000269" key="2">
    <source>
    </source>
</evidence>
<evidence type="ECO:0000305" key="3"/>
<evidence type="ECO:0000305" key="4">
    <source>
    </source>
</evidence>
<evidence type="ECO:0007829" key="5">
    <source>
        <dbReference type="PDB" id="4U2Y"/>
    </source>
</evidence>
<evidence type="ECO:0007829" key="6">
    <source>
        <dbReference type="PDB" id="4U31"/>
    </source>
</evidence>
<evidence type="ECO:0007829" key="7">
    <source>
        <dbReference type="PDB" id="5LGW"/>
    </source>
</evidence>
<evidence type="ECO:0007829" key="8">
    <source>
        <dbReference type="PDB" id="5VT4"/>
    </source>
</evidence>
<evidence type="ECO:0007829" key="9">
    <source>
        <dbReference type="PDB" id="7MEL"/>
    </source>
</evidence>
<gene>
    <name type="primary">glgE1</name>
    <name type="synonym">pep1</name>
    <name type="synonym">pep1A</name>
    <name type="synonym">pep1I</name>
    <name type="ordered locus">SCO5443</name>
    <name type="ORF">SC6A11.19c</name>
</gene>
<name>GLGE1_STRCO</name>
<accession>Q9L1K2</accession>
<accession>O54202</accession>
<keyword id="KW-0002">3D-structure</keyword>
<keyword id="KW-0119">Carbohydrate metabolism</keyword>
<keyword id="KW-0328">Glycosyltransferase</keyword>
<keyword id="KW-1185">Reference proteome</keyword>
<keyword id="KW-0808">Transferase</keyword>
<comment type="function">
    <text evidence="2">Maltosyltransferase that uses maltose 1-phosphate (M1P) as the sugar donor to elongate linear or branched alpha-(1-&gt;4)-glucans. Maltooligosaccharides with a degree of polymerization (DP) superior or equal to 4 are efficient acceptors, with DP6 being optimal in the GlgE-catalyzed polymerization with M1P. Is specific for the alpha-anomer of M1P as substrate, since the beta-anomer of M1P gives no activity. Alpha-D-glucose 1-phosphate cannot serve as a donor substrate, but alpha-maltosyl fluoride is an efficient donor in vitro. Exhibits an alpha-retaining catalytic mechanism, with evidence that maltooligosaccharide acceptors are extended at their non-reducing ends. Is also able to catalyze the reverse reaction in vitro, releasing M1P from glycogen or maltoheptaose in the presence of inorganic phosphate. Also catalyzes disproportionation reactions through maltosyl transfer between maltooligosaccharides. Is probably involved in a branched alpha-glucan biosynthetic pathway from trehalose, together with TreS, Mak and GlgB.</text>
</comment>
<comment type="catalytic activity">
    <reaction evidence="2">
        <text>alpha-maltose 1-phosphate + [(1-&gt;4)-alpha-D-glucosyl](n) = [(1-&gt;4)-alpha-D-glucosyl](n+2) + phosphate</text>
        <dbReference type="Rhea" id="RHEA:42692"/>
        <dbReference type="Rhea" id="RHEA-COMP:9584"/>
        <dbReference type="Rhea" id="RHEA-COMP:10183"/>
        <dbReference type="ChEBI" id="CHEBI:15444"/>
        <dbReference type="ChEBI" id="CHEBI:43474"/>
        <dbReference type="ChEBI" id="CHEBI:63576"/>
        <dbReference type="EC" id="2.4.99.16"/>
    </reaction>
</comment>
<comment type="activity regulation">
    <text evidence="2">Is competitively inhibited by alpha-, beta- and gamma-cyclodextrins (cyclic maltooligosaccharides), unlike GlgE from M.tuberculosis.</text>
</comment>
<comment type="biophysicochemical properties">
    <kinetics>
        <KM evidence="2">1.5 mM for maltohexaose (in the presence of 5 mM M1P)</KM>
        <KM evidence="2">0.3 mM for alpha-maltose 1-phosphate</KM>
    </kinetics>
    <phDependence>
        <text evidence="2">Optimum pH is 7.0 with maltohexaose as acceptor substrate.</text>
    </phDependence>
    <temperatureDependence>
        <text evidence="2">Optimum temperature is 30 degrees Celsius with maltohexaose as acceptor substrate.</text>
    </temperatureDependence>
</comment>
<comment type="subunit">
    <text evidence="2">Homodimer.</text>
</comment>
<comment type="similarity">
    <text evidence="1">Belongs to the glycosyl hydrolase 13 family. GlgE subfamily.</text>
</comment>
<protein>
    <recommendedName>
        <fullName>Alpha-1,4-glucan:maltose-1-phosphate maltosyltransferase 1</fullName>
        <shortName>GMPMT 1</shortName>
        <ecNumber evidence="2">2.4.99.16</ecNumber>
    </recommendedName>
    <alternativeName>
        <fullName>(1-&gt;4)-alpha-D-glucan:maltose-1-phosphate alpha-D-maltosyltransferase 1</fullName>
    </alternativeName>
</protein>